<proteinExistence type="evidence at transcript level"/>
<sequence>MLDPTYPAFPIFAFLGIVCCLVPLPWHLQSWNSGTCFLMIWTAVACLNMFVNSIIWKDHAQNVAPVWCEISIRITLGASVGIPASSLCIVRRLYSIAKKFRAVMVDALICVLFPILYIILQIVVQGHRFNILENIGCFPAIINTPLTYPLTFMWPVLIGVISFIYSTLALIQFNRHRLQFTQFLHSNSTLSVSRYLRLMALAMTEMMCTTPMGVFVIILNAKATPVSPYVSWAVTHYGYGRIDQVPAIIWRSNRLLVASYELTRWSSPAIALIFFFYFGFAQEARRNYAAAWGWVRRAVGLPERVPSLPTTKKPFSSSDKGSGFAEKFAAKAKGLSSFNVKDFTSEFTSKAHDFTFKAKQYTLPRPMPQTPSSSGFSSSDSTRFGSSVDGKELPSPTTKEFSSPIPIHLSGMQTLASFDSNKDLPSPPAYDVEAQYGPYNIDNRVSYHIADAGVRASYPMGVAYSSDSEHRRIVPQHSTVPQHNTADEPASPALPDTPSSCSSSATFSTLQSRDFIVLPSTTDVTRGTGSLPTRRSPAGPPRLPSLSQLFGISSMTRERDVEAQVEDVATGTASPTTTAPAPASTTIAPASATMAPATTTTAPTTIANIQRGEPDVPASPRTHRASV</sequence>
<protein>
    <recommendedName>
        <fullName>Pheromone B alpha 2 receptor</fullName>
    </recommendedName>
</protein>
<gene>
    <name type="primary">BAR2</name>
</gene>
<accession>Q05659</accession>
<evidence type="ECO:0000255" key="1"/>
<evidence type="ECO:0000256" key="2">
    <source>
        <dbReference type="SAM" id="MobiDB-lite"/>
    </source>
</evidence>
<evidence type="ECO:0000269" key="3">
    <source>
    </source>
</evidence>
<evidence type="ECO:0000305" key="4"/>
<reference key="1">
    <citation type="journal article" date="1995" name="EMBO J.">
        <title>The mating-type locus B alpha 1 of Schizophyllum commune contains a pheromone receptor gene and putative pheromone genes.</title>
        <authorList>
            <person name="Wendland J."/>
            <person name="Vaillancourt L.J."/>
            <person name="Hegner J."/>
            <person name="Lengeler K.B."/>
            <person name="Laddison K.J."/>
            <person name="Specht C.A."/>
            <person name="Raper C.A."/>
            <person name="Kothe E."/>
        </authorList>
    </citation>
    <scope>NUCLEOTIDE SEQUENCE [GENOMIC DNA]</scope>
    <source>
        <strain>12-43 / FGSC 9297</strain>
    </source>
</reference>
<reference key="2">
    <citation type="journal article" date="2012" name="Eukaryot. Cell">
        <title>Transcriptome and functional analysis: Mating in the basidiomycete Schizophyllum commune.</title>
        <authorList>
            <person name="Erdmann S."/>
            <person name="Freihorst D."/>
            <person name="Raudaskoski M."/>
            <person name="Schmidt-Heck W."/>
            <person name="Jung E.M."/>
            <person name="Senftleben D."/>
            <person name="Kothe E."/>
        </authorList>
    </citation>
    <scope>SEQUENCE REVISION</scope>
    <scope>FUNCTION</scope>
    <scope>INDUCTION</scope>
    <scope>SUBCELLULAR LOCATION</scope>
</reference>
<comment type="function">
    <text evidence="3">Receptor for the BAP2 pheromone, a prenylated mating factor. The receptor/pheromone interaction may have a role in the fusion of clamp cells.</text>
</comment>
<comment type="subcellular location">
    <subcellularLocation>
        <location evidence="3">Cell membrane</location>
        <topology evidence="3">Multi-pass membrane protein</topology>
    </subcellularLocation>
    <text>Localizes to the hyphal plasma membrane and is found predominantly in unfused pseudoclamps.</text>
</comment>
<comment type="induction">
    <text evidence="3">Induced within 6 to 12 hours after mates contact.</text>
</comment>
<comment type="similarity">
    <text evidence="4">Belongs to the G-protein coupled receptor 4 family.</text>
</comment>
<organism>
    <name type="scientific">Schizophyllum commune</name>
    <name type="common">Split gill fungus</name>
    <dbReference type="NCBI Taxonomy" id="5334"/>
    <lineage>
        <taxon>Eukaryota</taxon>
        <taxon>Fungi</taxon>
        <taxon>Dikarya</taxon>
        <taxon>Basidiomycota</taxon>
        <taxon>Agaricomycotina</taxon>
        <taxon>Agaricomycetes</taxon>
        <taxon>Agaricomycetidae</taxon>
        <taxon>Agaricales</taxon>
        <taxon>Schizophyllaceae</taxon>
        <taxon>Schizophyllum</taxon>
    </lineage>
</organism>
<feature type="chain" id="PRO_0000195071" description="Pheromone B alpha 2 receptor">
    <location>
        <begin position="1"/>
        <end position="627"/>
    </location>
</feature>
<feature type="topological domain" description="Extracellular" evidence="1">
    <location>
        <begin position="1"/>
        <end position="7"/>
    </location>
</feature>
<feature type="transmembrane region" description="Helical" evidence="1">
    <location>
        <begin position="8"/>
        <end position="28"/>
    </location>
</feature>
<feature type="topological domain" description="Cytoplasmic" evidence="1">
    <location>
        <begin position="29"/>
        <end position="35"/>
    </location>
</feature>
<feature type="transmembrane region" description="Helical" evidence="1">
    <location>
        <begin position="36"/>
        <end position="56"/>
    </location>
</feature>
<feature type="topological domain" description="Extracellular" evidence="1">
    <location>
        <begin position="57"/>
        <end position="69"/>
    </location>
</feature>
<feature type="transmembrane region" description="Helical" evidence="1">
    <location>
        <begin position="70"/>
        <end position="90"/>
    </location>
</feature>
<feature type="topological domain" description="Cytoplasmic" evidence="1">
    <location>
        <begin position="91"/>
        <end position="102"/>
    </location>
</feature>
<feature type="transmembrane region" description="Helical" evidence="1">
    <location>
        <begin position="103"/>
        <end position="123"/>
    </location>
</feature>
<feature type="topological domain" description="Extracellular" evidence="1">
    <location>
        <begin position="124"/>
        <end position="150"/>
    </location>
</feature>
<feature type="transmembrane region" description="Helical" evidence="1">
    <location>
        <begin position="151"/>
        <end position="171"/>
    </location>
</feature>
<feature type="topological domain" description="Cytoplasmic" evidence="1">
    <location>
        <begin position="172"/>
        <end position="197"/>
    </location>
</feature>
<feature type="transmembrane region" description="Helical" evidence="1">
    <location>
        <begin position="198"/>
        <end position="218"/>
    </location>
</feature>
<feature type="topological domain" description="Extracellular" evidence="1">
    <location>
        <begin position="219"/>
        <end position="260"/>
    </location>
</feature>
<feature type="transmembrane region" description="Helical" evidence="1">
    <location>
        <begin position="261"/>
        <end position="281"/>
    </location>
</feature>
<feature type="topological domain" description="Cytoplasmic" evidence="1">
    <location>
        <begin position="282"/>
        <end position="627"/>
    </location>
</feature>
<feature type="region of interest" description="Disordered" evidence="2">
    <location>
        <begin position="363"/>
        <end position="405"/>
    </location>
</feature>
<feature type="region of interest" description="Disordered" evidence="2">
    <location>
        <begin position="479"/>
        <end position="505"/>
    </location>
</feature>
<feature type="region of interest" description="Disordered" evidence="2">
    <location>
        <begin position="518"/>
        <end position="627"/>
    </location>
</feature>
<feature type="compositionally biased region" description="Low complexity" evidence="2">
    <location>
        <begin position="372"/>
        <end position="387"/>
    </location>
</feature>
<feature type="compositionally biased region" description="Polar residues" evidence="2">
    <location>
        <begin position="519"/>
        <end position="533"/>
    </location>
</feature>
<feature type="compositionally biased region" description="Polar residues" evidence="2">
    <location>
        <begin position="545"/>
        <end position="555"/>
    </location>
</feature>
<feature type="compositionally biased region" description="Low complexity" evidence="2">
    <location>
        <begin position="569"/>
        <end position="607"/>
    </location>
</feature>
<dbReference type="EMBL" id="X91168">
    <property type="protein sequence ID" value="CAA62595.4"/>
    <property type="molecule type" value="Genomic_DNA"/>
</dbReference>
<dbReference type="PIR" id="S61920">
    <property type="entry name" value="S61920"/>
</dbReference>
<dbReference type="VEuPathDB" id="FungiDB:SCHCODRAFT_01034973"/>
<dbReference type="GO" id="GO:0005886">
    <property type="term" value="C:plasma membrane"/>
    <property type="evidence" value="ECO:0007669"/>
    <property type="project" value="UniProtKB-SubCell"/>
</dbReference>
<dbReference type="GO" id="GO:0004934">
    <property type="term" value="F:mating-type alpha-factor pheromone receptor activity"/>
    <property type="evidence" value="ECO:0007669"/>
    <property type="project" value="InterPro"/>
</dbReference>
<dbReference type="GO" id="GO:0000750">
    <property type="term" value="P:pheromone-dependent signal transduction involved in conjugation with cellular fusion"/>
    <property type="evidence" value="ECO:0007669"/>
    <property type="project" value="TreeGrafter"/>
</dbReference>
<dbReference type="CDD" id="cd14966">
    <property type="entry name" value="7tmD_STE3"/>
    <property type="match status" value="1"/>
</dbReference>
<dbReference type="InterPro" id="IPR000481">
    <property type="entry name" value="GPCR_Pheromne_B_alpha_rcpt"/>
</dbReference>
<dbReference type="InterPro" id="IPR001499">
    <property type="entry name" value="GPCR_STE3"/>
</dbReference>
<dbReference type="PANTHER" id="PTHR28097">
    <property type="entry name" value="PHEROMONE A FACTOR RECEPTOR"/>
    <property type="match status" value="1"/>
</dbReference>
<dbReference type="PANTHER" id="PTHR28097:SF1">
    <property type="entry name" value="PHEROMONE A FACTOR RECEPTOR"/>
    <property type="match status" value="1"/>
</dbReference>
<dbReference type="Pfam" id="PF02076">
    <property type="entry name" value="STE3"/>
    <property type="match status" value="1"/>
</dbReference>
<dbReference type="PRINTS" id="PR00899">
    <property type="entry name" value="GPCRSTE3"/>
</dbReference>
<dbReference type="PRINTS" id="PR00901">
    <property type="entry name" value="PHEROMONEBAR"/>
</dbReference>
<keyword id="KW-1003">Cell membrane</keyword>
<keyword id="KW-0297">G-protein coupled receptor</keyword>
<keyword id="KW-0472">Membrane</keyword>
<keyword id="KW-0589">Pheromone response</keyword>
<keyword id="KW-0675">Receptor</keyword>
<keyword id="KW-0807">Transducer</keyword>
<keyword id="KW-0812">Transmembrane</keyword>
<keyword id="KW-1133">Transmembrane helix</keyword>
<name>BAR2_SCHCO</name>